<name>PG045_VARV</name>
<feature type="chain" id="PRO_0000443227" description="Apoptosis regulator OPG045">
    <location>
        <begin position="1"/>
        <end position="237"/>
    </location>
</feature>
<feature type="helix" evidence="4">
    <location>
        <begin position="66"/>
        <end position="69"/>
    </location>
</feature>
<feature type="helix" evidence="4">
    <location>
        <begin position="73"/>
        <end position="96"/>
    </location>
</feature>
<feature type="helix" evidence="4">
    <location>
        <begin position="99"/>
        <end position="118"/>
    </location>
</feature>
<feature type="helix" evidence="4">
    <location>
        <begin position="120"/>
        <end position="132"/>
    </location>
</feature>
<feature type="helix" evidence="4">
    <location>
        <begin position="137"/>
        <end position="150"/>
    </location>
</feature>
<feature type="helix" evidence="4">
    <location>
        <begin position="155"/>
        <end position="169"/>
    </location>
</feature>
<feature type="helix" evidence="4">
    <location>
        <begin position="174"/>
        <end position="188"/>
    </location>
</feature>
<feature type="helix" evidence="4">
    <location>
        <begin position="191"/>
        <end position="200"/>
    </location>
</feature>
<accession>Q85365</accession>
<protein>
    <recommendedName>
        <fullName>Apoptosis regulator OPG045</fullName>
    </recommendedName>
    <alternativeName>
        <fullName>Apoptosis regulator Bcl-2 homolog</fullName>
        <shortName>vBcl-2</shortName>
    </alternativeName>
    <alternativeName>
        <fullName>F1L homolog</fullName>
    </alternativeName>
</protein>
<proteinExistence type="evidence at protein level"/>
<organismHost>
    <name type="scientific">Homo sapiens</name>
    <name type="common">Human</name>
    <dbReference type="NCBI Taxonomy" id="9606"/>
</organismHost>
<dbReference type="EMBL" id="L22579">
    <property type="protein sequence ID" value="AAA60773.1"/>
    <property type="molecule type" value="Genomic_DNA"/>
</dbReference>
<dbReference type="PIR" id="T28463">
    <property type="entry name" value="T28463"/>
</dbReference>
<dbReference type="PDB" id="5AJJ">
    <property type="method" value="X-ray"/>
    <property type="resolution" value="1.75 A"/>
    <property type="chains" value="A=39-201"/>
</dbReference>
<dbReference type="PDB" id="5AJK">
    <property type="method" value="X-ray"/>
    <property type="resolution" value="2.55 A"/>
    <property type="chains" value="A/C/E/G/I/K=39-201"/>
</dbReference>
<dbReference type="PDBsum" id="5AJJ"/>
<dbReference type="PDBsum" id="5AJK"/>
<dbReference type="SMR" id="Q85365"/>
<dbReference type="MEROPS" id="I91.001"/>
<dbReference type="Proteomes" id="UP000119805">
    <property type="component" value="Segment"/>
</dbReference>
<dbReference type="GO" id="GO:0044193">
    <property type="term" value="C:host cell mitochondrial outer membrane"/>
    <property type="evidence" value="ECO:0007669"/>
    <property type="project" value="UniProtKB-SubCell"/>
</dbReference>
<dbReference type="GO" id="GO:0016020">
    <property type="term" value="C:membrane"/>
    <property type="evidence" value="ECO:0007669"/>
    <property type="project" value="UniProtKB-KW"/>
</dbReference>
<dbReference type="GO" id="GO:0042981">
    <property type="term" value="P:regulation of apoptotic process"/>
    <property type="evidence" value="ECO:0007669"/>
    <property type="project" value="InterPro"/>
</dbReference>
<dbReference type="GO" id="GO:0033668">
    <property type="term" value="P:symbiont-mediated suppression of host apoptosis"/>
    <property type="evidence" value="ECO:0007669"/>
    <property type="project" value="UniProtKB-KW"/>
</dbReference>
<dbReference type="FunFam" id="1.10.437.10:FF:000013">
    <property type="entry name" value="Protein F1"/>
    <property type="match status" value="1"/>
</dbReference>
<dbReference type="Gene3D" id="1.10.437.10">
    <property type="entry name" value="Blc2-like"/>
    <property type="match status" value="1"/>
</dbReference>
<dbReference type="InterPro" id="IPR036834">
    <property type="entry name" value="Bcl-2-like_sf"/>
</dbReference>
<dbReference type="InterPro" id="IPR011207">
    <property type="entry name" value="Orthopox_F1"/>
</dbReference>
<dbReference type="InterPro" id="IPR021119">
    <property type="entry name" value="Poxvirus_F1/C10"/>
</dbReference>
<dbReference type="Pfam" id="PF11099">
    <property type="entry name" value="M11L"/>
    <property type="match status" value="1"/>
</dbReference>
<dbReference type="PIRSF" id="PIRSF015971">
    <property type="entry name" value="VAC_F1L"/>
    <property type="match status" value="1"/>
</dbReference>
<evidence type="ECO:0000250" key="1">
    <source>
        <dbReference type="UniProtKB" id="P24356"/>
    </source>
</evidence>
<evidence type="ECO:0000269" key="2">
    <source>
    </source>
</evidence>
<evidence type="ECO:0000305" key="3"/>
<evidence type="ECO:0007829" key="4">
    <source>
        <dbReference type="PDB" id="5AJJ"/>
    </source>
</evidence>
<reference key="1">
    <citation type="journal article" date="1993" name="Nature">
        <title>Potential virulence determinants in terminal regions of variola smallpox virus genome.</title>
        <authorList>
            <person name="Massung R.F."/>
            <person name="Esposito J.J."/>
            <person name="Liu L.I."/>
            <person name="Qi J."/>
            <person name="Utterback T.R."/>
            <person name="Knight J.C."/>
            <person name="Aubin L."/>
            <person name="Yuran T.E."/>
            <person name="Parsons J.M."/>
            <person name="Loparev V.N."/>
            <person name="Selivanov N.A."/>
            <person name="Cavallaro K.F."/>
            <person name="Kerlavage A.R."/>
            <person name="Mahy B.W.J."/>
            <person name="Venter J.C."/>
        </authorList>
    </citation>
    <scope>NUCLEOTIDE SEQUENCE [LARGE SCALE GENOMIC DNA]</scope>
    <source>
        <strain>Bangladesh-1975</strain>
    </source>
</reference>
<reference key="2">
    <citation type="journal article" date="2015" name="Cell Death Dis.">
        <title>Variola virus F1L is a Bcl-2-like protein that unlike its vaccinia virus counterpart inhibits apoptosis independent of Bim.</title>
        <authorList>
            <person name="Marshall B."/>
            <person name="Puthalakath H."/>
            <person name="Caria S."/>
            <person name="Chugh S."/>
            <person name="Doerflinger M."/>
            <person name="Colman P.M."/>
            <person name="Kvansakul M."/>
        </authorList>
    </citation>
    <scope>X-RAY CRYSTALLOGRAPHY (1.75 ANGSTROMS) OF 39-201</scope>
    <scope>INTERACTION WITH HOST BID; BAX AND BAK1</scope>
    <scope>FUNCTION</scope>
</reference>
<keyword id="KW-0002">3D-structure</keyword>
<keyword id="KW-0244">Early protein</keyword>
<keyword id="KW-1035">Host cytoplasm</keyword>
<keyword id="KW-1043">Host membrane</keyword>
<keyword id="KW-1045">Host mitochondrion</keyword>
<keyword id="KW-1047">Host mitochondrion outer membrane</keyword>
<keyword id="KW-0945">Host-virus interaction</keyword>
<keyword id="KW-1081">Inhibition of host apoptosis by viral BCL2-like protein</keyword>
<keyword id="KW-0472">Membrane</keyword>
<keyword id="KW-1119">Modulation of host cell apoptosis by virus</keyword>
<organism>
    <name type="scientific">Variola virus</name>
    <dbReference type="NCBI Taxonomy" id="10255"/>
    <lineage>
        <taxon>Viruses</taxon>
        <taxon>Varidnaviria</taxon>
        <taxon>Bamfordvirae</taxon>
        <taxon>Nucleocytoviricota</taxon>
        <taxon>Pokkesviricetes</taxon>
        <taxon>Chitovirales</taxon>
        <taxon>Poxviridae</taxon>
        <taxon>Chordopoxvirinae</taxon>
        <taxon>Orthopoxvirus</taxon>
    </lineage>
</organism>
<comment type="function">
    <text evidence="2">Plays a role in the inhibition of host apoptosis. Interacts with host BAX and thereby inhibits its activity.</text>
</comment>
<comment type="subunit">
    <text evidence="2">Interacts with host BAK1, BAX and BID.</text>
</comment>
<comment type="subcellular location">
    <subcellularLocation>
        <location evidence="1">Host mitochondrion outer membrane</location>
    </subcellularLocation>
    <subcellularLocation>
        <location evidence="1">Host cytoplasm</location>
    </subcellularLocation>
</comment>
<comment type="induction">
    <text evidence="1">Expressed in the early phase of the viral replicative cycle.</text>
</comment>
<comment type="similarity">
    <text evidence="3">Belongs to the orthopoxvirus OPG045 family.</text>
</comment>
<gene>
    <name type="primary">OPG045</name>
    <name type="synonym">C5L</name>
</gene>
<sequence length="237" mass="27716">MYNSMLPMFMCNNIVDDIDDIDDIDDIDDIDDIDDIDDKASNNDDHNYVYPLPENMVYRFNKSTNILDYLSTERDHVMMAVQYYMSKQRLDDLYRQLPTKTRSYIDIINMYCDKVNNDYNRDMNIMYDMASTESFTVYDINNEVNTILMDNKGLGVRLATISFITELGKRCMNPVETIKMFTLLSHTICDDCFIDYITDISPPDNTIPNISTREYLKLIGITAIMFATYKTLKYMIG</sequence>